<feature type="chain" id="PRO_0000382062" description="ATP synthase subunit delta">
    <location>
        <begin position="1"/>
        <end position="278"/>
    </location>
</feature>
<sequence length="278" mass="31463">MRGEASRIADRESRDSLAPKLRDTREDAWRIGNELFTITKVLDDSIQLERALTDPSRPVADKVAVLKELLGDNAHPMTMEIMTDLVSRRWSRARDIANAVEDFGVDAMMYYADATDATLQVSIELSELHSALLNLPVVRAKLYDYQATSEARVKLFREVFSGKTLNKVTMRLAEHATCNLRRRRYLETIQWLINKFSRHMGESMVTVTTATPLKKEQIKRLVEVYSAKVGRQVHINSVVDPTVLGGMRIQVGDEVTDNTVVAQLQNLHRKVQTEATPA</sequence>
<dbReference type="EMBL" id="AE014295">
    <property type="protein sequence ID" value="AAN24198.1"/>
    <property type="molecule type" value="Genomic_DNA"/>
</dbReference>
<dbReference type="RefSeq" id="NP_695562.1">
    <property type="nucleotide sequence ID" value="NC_004307.2"/>
</dbReference>
<dbReference type="RefSeq" id="WP_007054765.1">
    <property type="nucleotide sequence ID" value="NC_004307.2"/>
</dbReference>
<dbReference type="SMR" id="Q8G7B0"/>
<dbReference type="STRING" id="206672.BL0360"/>
<dbReference type="EnsemblBacteria" id="AAN24198">
    <property type="protein sequence ID" value="AAN24198"/>
    <property type="gene ID" value="BL0360"/>
</dbReference>
<dbReference type="KEGG" id="blo:BL0360"/>
<dbReference type="PATRIC" id="fig|206672.9.peg.1096"/>
<dbReference type="HOGENOM" id="CLU_088880_0_0_11"/>
<dbReference type="OrthoDB" id="5242917at2"/>
<dbReference type="PhylomeDB" id="Q8G7B0"/>
<dbReference type="Proteomes" id="UP000000439">
    <property type="component" value="Chromosome"/>
</dbReference>
<dbReference type="GO" id="GO:0005886">
    <property type="term" value="C:plasma membrane"/>
    <property type="evidence" value="ECO:0007669"/>
    <property type="project" value="UniProtKB-SubCell"/>
</dbReference>
<dbReference type="GO" id="GO:0045259">
    <property type="term" value="C:proton-transporting ATP synthase complex"/>
    <property type="evidence" value="ECO:0007669"/>
    <property type="project" value="UniProtKB-KW"/>
</dbReference>
<dbReference type="GO" id="GO:0046933">
    <property type="term" value="F:proton-transporting ATP synthase activity, rotational mechanism"/>
    <property type="evidence" value="ECO:0007669"/>
    <property type="project" value="UniProtKB-UniRule"/>
</dbReference>
<dbReference type="HAMAP" id="MF_01416">
    <property type="entry name" value="ATP_synth_delta_bact"/>
    <property type="match status" value="1"/>
</dbReference>
<dbReference type="InterPro" id="IPR020781">
    <property type="entry name" value="ATPase_OSCP/d_CS"/>
</dbReference>
<dbReference type="InterPro" id="IPR000711">
    <property type="entry name" value="ATPase_OSCP/dsu"/>
</dbReference>
<dbReference type="NCBIfam" id="NF009967">
    <property type="entry name" value="PRK13430.1"/>
    <property type="match status" value="1"/>
</dbReference>
<dbReference type="PANTHER" id="PTHR11910">
    <property type="entry name" value="ATP SYNTHASE DELTA CHAIN"/>
    <property type="match status" value="1"/>
</dbReference>
<dbReference type="Pfam" id="PF00213">
    <property type="entry name" value="OSCP"/>
    <property type="match status" value="1"/>
</dbReference>
<dbReference type="PRINTS" id="PR00125">
    <property type="entry name" value="ATPASEDELTA"/>
</dbReference>
<dbReference type="PROSITE" id="PS00389">
    <property type="entry name" value="ATPASE_DELTA"/>
    <property type="match status" value="1"/>
</dbReference>
<name>ATPD_BIFLO</name>
<gene>
    <name evidence="1" type="primary">atpH</name>
    <name type="ordered locus">BL0360</name>
</gene>
<reference key="1">
    <citation type="journal article" date="2002" name="Proc. Natl. Acad. Sci. U.S.A.">
        <title>The genome sequence of Bifidobacterium longum reflects its adaptation to the human gastrointestinal tract.</title>
        <authorList>
            <person name="Schell M.A."/>
            <person name="Karmirantzou M."/>
            <person name="Snel B."/>
            <person name="Vilanova D."/>
            <person name="Berger B."/>
            <person name="Pessi G."/>
            <person name="Zwahlen M.-C."/>
            <person name="Desiere F."/>
            <person name="Bork P."/>
            <person name="Delley M."/>
            <person name="Pridmore R.D."/>
            <person name="Arigoni F."/>
        </authorList>
    </citation>
    <scope>NUCLEOTIDE SEQUENCE [LARGE SCALE GENOMIC DNA]</scope>
    <source>
        <strain>NCC 2705</strain>
    </source>
</reference>
<comment type="function">
    <text evidence="1">F(1)F(0) ATP synthase produces ATP from ADP in the presence of a proton or sodium gradient. F-type ATPases consist of two structural domains, F(1) containing the extramembraneous catalytic core and F(0) containing the membrane proton channel, linked together by a central stalk and a peripheral stalk. During catalysis, ATP synthesis in the catalytic domain of F(1) is coupled via a rotary mechanism of the central stalk subunits to proton translocation.</text>
</comment>
<comment type="function">
    <text evidence="1">This protein is part of the stalk that links CF(0) to CF(1). It either transmits conformational changes from CF(0) to CF(1) or is implicated in proton conduction.</text>
</comment>
<comment type="subunit">
    <text evidence="1">F-type ATPases have 2 components, F(1) - the catalytic core - and F(0) - the membrane proton channel. F(1) has five subunits: alpha(3), beta(3), gamma(1), delta(1), epsilon(1). F(0) has three main subunits: a(1), b(2) and c(10-14). The alpha and beta chains form an alternating ring which encloses part of the gamma chain. F(1) is attached to F(0) by a central stalk formed by the gamma and epsilon chains, while a peripheral stalk is formed by the delta and b chains.</text>
</comment>
<comment type="subcellular location">
    <subcellularLocation>
        <location evidence="1">Cell membrane</location>
        <topology evidence="1">Peripheral membrane protein</topology>
    </subcellularLocation>
</comment>
<comment type="similarity">
    <text evidence="1">Belongs to the ATPase delta chain family.</text>
</comment>
<accession>Q8G7B0</accession>
<proteinExistence type="inferred from homology"/>
<protein>
    <recommendedName>
        <fullName evidence="1">ATP synthase subunit delta</fullName>
    </recommendedName>
    <alternativeName>
        <fullName evidence="1">ATP synthase F(1) sector subunit delta</fullName>
    </alternativeName>
    <alternativeName>
        <fullName evidence="1">F-type ATPase subunit delta</fullName>
        <shortName evidence="1">F-ATPase subunit delta</shortName>
    </alternativeName>
</protein>
<organism>
    <name type="scientific">Bifidobacterium longum (strain NCC 2705)</name>
    <dbReference type="NCBI Taxonomy" id="206672"/>
    <lineage>
        <taxon>Bacteria</taxon>
        <taxon>Bacillati</taxon>
        <taxon>Actinomycetota</taxon>
        <taxon>Actinomycetes</taxon>
        <taxon>Bifidobacteriales</taxon>
        <taxon>Bifidobacteriaceae</taxon>
        <taxon>Bifidobacterium</taxon>
    </lineage>
</organism>
<evidence type="ECO:0000255" key="1">
    <source>
        <dbReference type="HAMAP-Rule" id="MF_01416"/>
    </source>
</evidence>
<keyword id="KW-0066">ATP synthesis</keyword>
<keyword id="KW-1003">Cell membrane</keyword>
<keyword id="KW-0139">CF(1)</keyword>
<keyword id="KW-0375">Hydrogen ion transport</keyword>
<keyword id="KW-0406">Ion transport</keyword>
<keyword id="KW-0472">Membrane</keyword>
<keyword id="KW-1185">Reference proteome</keyword>
<keyword id="KW-0813">Transport</keyword>